<protein>
    <recommendedName>
        <fullName>APC membrane recruitment protein 2</fullName>
        <shortName>Amer2</shortName>
    </recommendedName>
    <alternativeName>
        <fullName>Protein FAM123A</fullName>
    </alternativeName>
</protein>
<feature type="chain" id="PRO_0000416260" description="APC membrane recruitment protein 2">
    <location>
        <begin position="1"/>
        <end position="624"/>
    </location>
</feature>
<feature type="region of interest" description="Disordered" evidence="2">
    <location>
        <begin position="1"/>
        <end position="308"/>
    </location>
</feature>
<feature type="region of interest" description="Disordered" evidence="2">
    <location>
        <begin position="342"/>
        <end position="596"/>
    </location>
</feature>
<feature type="compositionally biased region" description="Basic and acidic residues" evidence="2">
    <location>
        <begin position="74"/>
        <end position="91"/>
    </location>
</feature>
<feature type="compositionally biased region" description="Low complexity" evidence="2">
    <location>
        <begin position="101"/>
        <end position="111"/>
    </location>
</feature>
<feature type="compositionally biased region" description="Basic and acidic residues" evidence="2">
    <location>
        <begin position="120"/>
        <end position="132"/>
    </location>
</feature>
<feature type="compositionally biased region" description="Basic and acidic residues" evidence="2">
    <location>
        <begin position="247"/>
        <end position="258"/>
    </location>
</feature>
<feature type="compositionally biased region" description="Low complexity" evidence="2">
    <location>
        <begin position="272"/>
        <end position="282"/>
    </location>
</feature>
<feature type="compositionally biased region" description="Low complexity" evidence="2">
    <location>
        <begin position="295"/>
        <end position="307"/>
    </location>
</feature>
<feature type="compositionally biased region" description="Gly residues" evidence="2">
    <location>
        <begin position="406"/>
        <end position="416"/>
    </location>
</feature>
<feature type="compositionally biased region" description="Basic and acidic residues" evidence="2">
    <location>
        <begin position="450"/>
        <end position="464"/>
    </location>
</feature>
<feature type="compositionally biased region" description="Polar residues" evidence="2">
    <location>
        <begin position="535"/>
        <end position="549"/>
    </location>
</feature>
<gene>
    <name type="primary">AMER2</name>
    <name type="synonym">FAM123A</name>
</gene>
<dbReference type="EMBL" id="AADN02005159">
    <property type="status" value="NOT_ANNOTATED_CDS"/>
    <property type="molecule type" value="Genomic_DNA"/>
</dbReference>
<dbReference type="FunCoup" id="E1C2Q8">
    <property type="interactions" value="78"/>
</dbReference>
<dbReference type="STRING" id="9031.ENSGALP00000043401"/>
<dbReference type="PaxDb" id="9031-ENSGALP00000043401"/>
<dbReference type="Ensembl" id="ENSGALT00000151865">
    <property type="protein sequence ID" value="ENSGALP00000094278"/>
    <property type="gene ID" value="ENSGALG00000058990"/>
</dbReference>
<dbReference type="VEuPathDB" id="HostDB:geneid_418939"/>
<dbReference type="InParanoid" id="E1C2Q8"/>
<dbReference type="OrthoDB" id="9943219at2759"/>
<dbReference type="PhylomeDB" id="E1C2Q8"/>
<dbReference type="TreeFam" id="TF333006"/>
<dbReference type="PRO" id="PR:E1C2Q8"/>
<dbReference type="Proteomes" id="UP000000539">
    <property type="component" value="Chromosome 1"/>
</dbReference>
<dbReference type="Bgee" id="ENSGALG00000027868">
    <property type="expression patterns" value="Expressed in cerebellum and 4 other cell types or tissues"/>
</dbReference>
<dbReference type="GO" id="GO:0005886">
    <property type="term" value="C:plasma membrane"/>
    <property type="evidence" value="ECO:0000250"/>
    <property type="project" value="UniProtKB"/>
</dbReference>
<dbReference type="GO" id="GO:0008013">
    <property type="term" value="F:beta-catenin binding"/>
    <property type="evidence" value="ECO:0000318"/>
    <property type="project" value="GO_Central"/>
</dbReference>
<dbReference type="GO" id="GO:0005546">
    <property type="term" value="F:phosphatidylinositol-4,5-bisphosphate binding"/>
    <property type="evidence" value="ECO:0000250"/>
    <property type="project" value="UniProtKB"/>
</dbReference>
<dbReference type="GO" id="GO:0007398">
    <property type="term" value="P:ectoderm development"/>
    <property type="evidence" value="ECO:0000250"/>
    <property type="project" value="UniProtKB"/>
</dbReference>
<dbReference type="GO" id="GO:0090090">
    <property type="term" value="P:negative regulation of canonical Wnt signaling pathway"/>
    <property type="evidence" value="ECO:0000250"/>
    <property type="project" value="UniProtKB"/>
</dbReference>
<dbReference type="GO" id="GO:0060828">
    <property type="term" value="P:regulation of canonical Wnt signaling pathway"/>
    <property type="evidence" value="ECO:0000318"/>
    <property type="project" value="GO_Central"/>
</dbReference>
<dbReference type="GO" id="GO:0016055">
    <property type="term" value="P:Wnt signaling pathway"/>
    <property type="evidence" value="ECO:0007669"/>
    <property type="project" value="UniProtKB-KW"/>
</dbReference>
<dbReference type="InterPro" id="IPR019003">
    <property type="entry name" value="AMER"/>
</dbReference>
<dbReference type="PANTHER" id="PTHR22237:SF1">
    <property type="entry name" value="APC MEMBRANE RECRUITMENT PROTEIN 2"/>
    <property type="match status" value="1"/>
</dbReference>
<dbReference type="PANTHER" id="PTHR22237">
    <property type="entry name" value="APC MEMBRANE RECRUITMENT PROTEIN 2-RELATED"/>
    <property type="match status" value="1"/>
</dbReference>
<dbReference type="Pfam" id="PF09422">
    <property type="entry name" value="AMER"/>
    <property type="match status" value="1"/>
</dbReference>
<reference key="1">
    <citation type="journal article" date="2004" name="Nature">
        <title>Sequence and comparative analysis of the chicken genome provide unique perspectives on vertebrate evolution.</title>
        <authorList>
            <person name="Hillier L.W."/>
            <person name="Miller W."/>
            <person name="Birney E."/>
            <person name="Warren W."/>
            <person name="Hardison R.C."/>
            <person name="Ponting C.P."/>
            <person name="Bork P."/>
            <person name="Burt D.W."/>
            <person name="Groenen M.A.M."/>
            <person name="Delany M.E."/>
            <person name="Dodgson J.B."/>
            <person name="Chinwalla A.T."/>
            <person name="Cliften P.F."/>
            <person name="Clifton S.W."/>
            <person name="Delehaunty K.D."/>
            <person name="Fronick C."/>
            <person name="Fulton R.S."/>
            <person name="Graves T.A."/>
            <person name="Kremitzki C."/>
            <person name="Layman D."/>
            <person name="Magrini V."/>
            <person name="McPherson J.D."/>
            <person name="Miner T.L."/>
            <person name="Minx P."/>
            <person name="Nash W.E."/>
            <person name="Nhan M.N."/>
            <person name="Nelson J.O."/>
            <person name="Oddy L.G."/>
            <person name="Pohl C.S."/>
            <person name="Randall-Maher J."/>
            <person name="Smith S.M."/>
            <person name="Wallis J.W."/>
            <person name="Yang S.-P."/>
            <person name="Romanov M.N."/>
            <person name="Rondelli C.M."/>
            <person name="Paton B."/>
            <person name="Smith J."/>
            <person name="Morrice D."/>
            <person name="Daniels L."/>
            <person name="Tempest H.G."/>
            <person name="Robertson L."/>
            <person name="Masabanda J.S."/>
            <person name="Griffin D.K."/>
            <person name="Vignal A."/>
            <person name="Fillon V."/>
            <person name="Jacobbson L."/>
            <person name="Kerje S."/>
            <person name="Andersson L."/>
            <person name="Crooijmans R.P."/>
            <person name="Aerts J."/>
            <person name="van der Poel J.J."/>
            <person name="Ellegren H."/>
            <person name="Caldwell R.B."/>
            <person name="Hubbard S.J."/>
            <person name="Grafham D.V."/>
            <person name="Kierzek A.M."/>
            <person name="McLaren S.R."/>
            <person name="Overton I.M."/>
            <person name="Arakawa H."/>
            <person name="Beattie K.J."/>
            <person name="Bezzubov Y."/>
            <person name="Boardman P.E."/>
            <person name="Bonfield J.K."/>
            <person name="Croning M.D.R."/>
            <person name="Davies R.M."/>
            <person name="Francis M.D."/>
            <person name="Humphray S.J."/>
            <person name="Scott C.E."/>
            <person name="Taylor R.G."/>
            <person name="Tickle C."/>
            <person name="Brown W.R.A."/>
            <person name="Rogers J."/>
            <person name="Buerstedde J.-M."/>
            <person name="Wilson S.A."/>
            <person name="Stubbs L."/>
            <person name="Ovcharenko I."/>
            <person name="Gordon L."/>
            <person name="Lucas S."/>
            <person name="Miller M.M."/>
            <person name="Inoko H."/>
            <person name="Shiina T."/>
            <person name="Kaufman J."/>
            <person name="Salomonsen J."/>
            <person name="Skjoedt K."/>
            <person name="Wong G.K.-S."/>
            <person name="Wang J."/>
            <person name="Liu B."/>
            <person name="Wang J."/>
            <person name="Yu J."/>
            <person name="Yang H."/>
            <person name="Nefedov M."/>
            <person name="Koriabine M."/>
            <person name="Dejong P.J."/>
            <person name="Goodstadt L."/>
            <person name="Webber C."/>
            <person name="Dickens N.J."/>
            <person name="Letunic I."/>
            <person name="Suyama M."/>
            <person name="Torrents D."/>
            <person name="von Mering C."/>
            <person name="Zdobnov E.M."/>
            <person name="Makova K."/>
            <person name="Nekrutenko A."/>
            <person name="Elnitski L."/>
            <person name="Eswara P."/>
            <person name="King D.C."/>
            <person name="Yang S.-P."/>
            <person name="Tyekucheva S."/>
            <person name="Radakrishnan A."/>
            <person name="Harris R.S."/>
            <person name="Chiaromonte F."/>
            <person name="Taylor J."/>
            <person name="He J."/>
            <person name="Rijnkels M."/>
            <person name="Griffiths-Jones S."/>
            <person name="Ureta-Vidal A."/>
            <person name="Hoffman M.M."/>
            <person name="Severin J."/>
            <person name="Searle S.M.J."/>
            <person name="Law A.S."/>
            <person name="Speed D."/>
            <person name="Waddington D."/>
            <person name="Cheng Z."/>
            <person name="Tuzun E."/>
            <person name="Eichler E."/>
            <person name="Bao Z."/>
            <person name="Flicek P."/>
            <person name="Shteynberg D.D."/>
            <person name="Brent M.R."/>
            <person name="Bye J.M."/>
            <person name="Huckle E.J."/>
            <person name="Chatterji S."/>
            <person name="Dewey C."/>
            <person name="Pachter L."/>
            <person name="Kouranov A."/>
            <person name="Mourelatos Z."/>
            <person name="Hatzigeorgiou A.G."/>
            <person name="Paterson A.H."/>
            <person name="Ivarie R."/>
            <person name="Brandstrom M."/>
            <person name="Axelsson E."/>
            <person name="Backstrom N."/>
            <person name="Berlin S."/>
            <person name="Webster M.T."/>
            <person name="Pourquie O."/>
            <person name="Reymond A."/>
            <person name="Ucla C."/>
            <person name="Antonarakis S.E."/>
            <person name="Long M."/>
            <person name="Emerson J.J."/>
            <person name="Betran E."/>
            <person name="Dupanloup I."/>
            <person name="Kaessmann H."/>
            <person name="Hinrichs A.S."/>
            <person name="Bejerano G."/>
            <person name="Furey T.S."/>
            <person name="Harte R.A."/>
            <person name="Raney B."/>
            <person name="Siepel A."/>
            <person name="Kent W.J."/>
            <person name="Haussler D."/>
            <person name="Eyras E."/>
            <person name="Castelo R."/>
            <person name="Abril J.F."/>
            <person name="Castellano S."/>
            <person name="Camara F."/>
            <person name="Parra G."/>
            <person name="Guigo R."/>
            <person name="Bourque G."/>
            <person name="Tesler G."/>
            <person name="Pevzner P.A."/>
            <person name="Smit A."/>
            <person name="Fulton L.A."/>
            <person name="Mardis E.R."/>
            <person name="Wilson R.K."/>
        </authorList>
    </citation>
    <scope>NUCLEOTIDE SEQUENCE [LARGE SCALE GENOMIC DNA]</scope>
    <source>
        <strain>Red jungle fowl</strain>
    </source>
</reference>
<name>AMER2_CHICK</name>
<sequence>MDSHCDCAEPPAAEQPSGKINKTAFKLFKRRKSGGTMPSIFGVRSKGGEGKGASKTGMVRSRTHDGLADAVLESGKKEDAGGGEAQGKDAPSRAAGGLGGSASSSVAKSHSFFSLLRKNGRPENGKAAENAEQRAGGRQKKGLKGIFSSMRWHRKDKIGKEERGEASEIPSGLIMPGSLTASLECIKEETPKPLSETPNGAGDTGVESQQEKRGGDACVSAEEPQAGGGESRDSKTPPGEDPAAAARRLEELCGERPDPGAGEVGTAKDAAITGDIPITTIPPVEPHCDSGQETAAAPDPSSVDPPSEQSIDRICLMFADVTSLKSFDSLTGCGDIIADQEEDVGGGSGGCEKSTPGAGKLGAPKKHPTMVAYQGGGEEMASPDQVDDTYLQEFWDMLSQTEETETGGGGGGGGGTKTPEGLKENRGTEGAQNRVAVKRGGLNQIPIHLNNKEEQKGREKEQHEGVPNSDEGYWDSTTPGPEEDSTTSIQKETLPRDSYSGDALYDLYAEPDENPPGGPPEEEVTCMPRSKPVSPITTTCSLKTPSSTVKDSKIPISIKHLASHPASHGTDTSNSHHVAHHHLAKSEMHRTKIPVSKVLVRRVSNRGLAGTTVKAATHQDSAKK</sequence>
<accession>E1C2Q8</accession>
<evidence type="ECO:0000250" key="1"/>
<evidence type="ECO:0000256" key="2">
    <source>
        <dbReference type="SAM" id="MobiDB-lite"/>
    </source>
</evidence>
<evidence type="ECO:0000305" key="3"/>
<organism>
    <name type="scientific">Gallus gallus</name>
    <name type="common">Chicken</name>
    <dbReference type="NCBI Taxonomy" id="9031"/>
    <lineage>
        <taxon>Eukaryota</taxon>
        <taxon>Metazoa</taxon>
        <taxon>Chordata</taxon>
        <taxon>Craniata</taxon>
        <taxon>Vertebrata</taxon>
        <taxon>Euteleostomi</taxon>
        <taxon>Archelosauria</taxon>
        <taxon>Archosauria</taxon>
        <taxon>Dinosauria</taxon>
        <taxon>Saurischia</taxon>
        <taxon>Theropoda</taxon>
        <taxon>Coelurosauria</taxon>
        <taxon>Aves</taxon>
        <taxon>Neognathae</taxon>
        <taxon>Galloanserae</taxon>
        <taxon>Galliformes</taxon>
        <taxon>Phasianidae</taxon>
        <taxon>Phasianinae</taxon>
        <taxon>Gallus</taxon>
    </lineage>
</organism>
<keyword id="KW-1003">Cell membrane</keyword>
<keyword id="KW-0446">Lipid-binding</keyword>
<keyword id="KW-0472">Membrane</keyword>
<keyword id="KW-1185">Reference proteome</keyword>
<keyword id="KW-0879">Wnt signaling pathway</keyword>
<comment type="function">
    <text evidence="1">Negative regulator of the canonical Wnt signaling pathway involved in neuroectodermal patterning. Acts by specifically binding phosphatidylinositol 4,5-bisphosphate (PtdIns(4,5)P2), translocating to the cell membrane and interacting with key regulators of the canonical Wnt signaling pathway, such as components of the beta-catenin destruction complex (By similarity).</text>
</comment>
<comment type="subcellular location">
    <subcellularLocation>
        <location evidence="1">Cell membrane</location>
        <topology evidence="1">Peripheral membrane protein</topology>
    </subcellularLocation>
    <text evidence="1">Translocates to the cell membrane following binding to PtdIns(4,5)P2.</text>
</comment>
<comment type="similarity">
    <text evidence="3">Belongs to the Amer family.</text>
</comment>
<proteinExistence type="inferred from homology"/>